<feature type="chain" id="PRO_0000386206" description="GTPase Obg">
    <location>
        <begin position="1"/>
        <end position="330"/>
    </location>
</feature>
<feature type="domain" description="Obg" evidence="2">
    <location>
        <begin position="1"/>
        <end position="159"/>
    </location>
</feature>
<feature type="domain" description="OBG-type G" evidence="1">
    <location>
        <begin position="160"/>
        <end position="327"/>
    </location>
</feature>
<feature type="binding site" evidence="1">
    <location>
        <begin position="166"/>
        <end position="173"/>
    </location>
    <ligand>
        <name>GTP</name>
        <dbReference type="ChEBI" id="CHEBI:37565"/>
    </ligand>
</feature>
<feature type="binding site" evidence="1">
    <location>
        <position position="173"/>
    </location>
    <ligand>
        <name>Mg(2+)</name>
        <dbReference type="ChEBI" id="CHEBI:18420"/>
    </ligand>
</feature>
<feature type="binding site" evidence="1">
    <location>
        <begin position="191"/>
        <end position="195"/>
    </location>
    <ligand>
        <name>GTP</name>
        <dbReference type="ChEBI" id="CHEBI:37565"/>
    </ligand>
</feature>
<feature type="binding site" evidence="1">
    <location>
        <position position="193"/>
    </location>
    <ligand>
        <name>Mg(2+)</name>
        <dbReference type="ChEBI" id="CHEBI:18420"/>
    </ligand>
</feature>
<feature type="binding site" evidence="1">
    <location>
        <begin position="212"/>
        <end position="215"/>
    </location>
    <ligand>
        <name>GTP</name>
        <dbReference type="ChEBI" id="CHEBI:37565"/>
    </ligand>
</feature>
<feature type="binding site" evidence="1">
    <location>
        <begin position="279"/>
        <end position="282"/>
    </location>
    <ligand>
        <name>GTP</name>
        <dbReference type="ChEBI" id="CHEBI:37565"/>
    </ligand>
</feature>
<feature type="binding site" evidence="1">
    <location>
        <begin position="308"/>
        <end position="310"/>
    </location>
    <ligand>
        <name>GTP</name>
        <dbReference type="ChEBI" id="CHEBI:37565"/>
    </ligand>
</feature>
<comment type="function">
    <text evidence="1">An essential GTPase which binds GTP, GDP and possibly (p)ppGpp with moderate affinity, with high nucleotide exchange rates and a fairly low GTP hydrolysis rate. Plays a role in control of the cell cycle, stress response, ribosome biogenesis and in those bacteria that undergo differentiation, in morphogenesis control.</text>
</comment>
<comment type="cofactor">
    <cofactor evidence="1">
        <name>Mg(2+)</name>
        <dbReference type="ChEBI" id="CHEBI:18420"/>
    </cofactor>
</comment>
<comment type="subunit">
    <text evidence="1">Monomer.</text>
</comment>
<comment type="subcellular location">
    <subcellularLocation>
        <location evidence="1">Cytoplasm</location>
    </subcellularLocation>
</comment>
<comment type="similarity">
    <text evidence="1">Belongs to the TRAFAC class OBG-HflX-like GTPase superfamily. OBG GTPase family.</text>
</comment>
<comment type="sequence caution" evidence="3">
    <conflict type="erroneous initiation">
        <sequence resource="EMBL-CDS" id="ABY73251"/>
    </conflict>
    <text>Extended N-terminus.</text>
</comment>
<dbReference type="EC" id="3.6.5.-" evidence="1"/>
<dbReference type="EMBL" id="CP000766">
    <property type="protein sequence ID" value="ABY73251.1"/>
    <property type="status" value="ALT_INIT"/>
    <property type="molecule type" value="Genomic_DNA"/>
</dbReference>
<dbReference type="SMR" id="B0BVJ1"/>
<dbReference type="KEGG" id="rrj:RrIowa_1532"/>
<dbReference type="eggNOG" id="COG0536">
    <property type="taxonomic scope" value="Bacteria"/>
</dbReference>
<dbReference type="HOGENOM" id="CLU_011747_2_0_5"/>
<dbReference type="Proteomes" id="UP000000796">
    <property type="component" value="Chromosome"/>
</dbReference>
<dbReference type="GO" id="GO:0005737">
    <property type="term" value="C:cytoplasm"/>
    <property type="evidence" value="ECO:0007669"/>
    <property type="project" value="UniProtKB-SubCell"/>
</dbReference>
<dbReference type="GO" id="GO:0005525">
    <property type="term" value="F:GTP binding"/>
    <property type="evidence" value="ECO:0007669"/>
    <property type="project" value="UniProtKB-UniRule"/>
</dbReference>
<dbReference type="GO" id="GO:0003924">
    <property type="term" value="F:GTPase activity"/>
    <property type="evidence" value="ECO:0007669"/>
    <property type="project" value="UniProtKB-UniRule"/>
</dbReference>
<dbReference type="GO" id="GO:0000287">
    <property type="term" value="F:magnesium ion binding"/>
    <property type="evidence" value="ECO:0007669"/>
    <property type="project" value="InterPro"/>
</dbReference>
<dbReference type="GO" id="GO:0042254">
    <property type="term" value="P:ribosome biogenesis"/>
    <property type="evidence" value="ECO:0007669"/>
    <property type="project" value="UniProtKB-UniRule"/>
</dbReference>
<dbReference type="CDD" id="cd01898">
    <property type="entry name" value="Obg"/>
    <property type="match status" value="1"/>
</dbReference>
<dbReference type="FunFam" id="2.70.210.12:FF:000001">
    <property type="entry name" value="GTPase Obg"/>
    <property type="match status" value="1"/>
</dbReference>
<dbReference type="Gene3D" id="2.70.210.12">
    <property type="entry name" value="GTP1/OBG domain"/>
    <property type="match status" value="1"/>
</dbReference>
<dbReference type="Gene3D" id="3.40.50.300">
    <property type="entry name" value="P-loop containing nucleotide triphosphate hydrolases"/>
    <property type="match status" value="1"/>
</dbReference>
<dbReference type="HAMAP" id="MF_01454">
    <property type="entry name" value="GTPase_Obg"/>
    <property type="match status" value="1"/>
</dbReference>
<dbReference type="InterPro" id="IPR031167">
    <property type="entry name" value="G_OBG"/>
</dbReference>
<dbReference type="InterPro" id="IPR006073">
    <property type="entry name" value="GTP-bd"/>
</dbReference>
<dbReference type="InterPro" id="IPR014100">
    <property type="entry name" value="GTP-bd_Obg/CgtA"/>
</dbReference>
<dbReference type="InterPro" id="IPR006074">
    <property type="entry name" value="GTP1-OBG_CS"/>
</dbReference>
<dbReference type="InterPro" id="IPR006169">
    <property type="entry name" value="GTP1_OBG_dom"/>
</dbReference>
<dbReference type="InterPro" id="IPR036726">
    <property type="entry name" value="GTP1_OBG_dom_sf"/>
</dbReference>
<dbReference type="InterPro" id="IPR045086">
    <property type="entry name" value="OBG_GTPase"/>
</dbReference>
<dbReference type="InterPro" id="IPR027417">
    <property type="entry name" value="P-loop_NTPase"/>
</dbReference>
<dbReference type="NCBIfam" id="TIGR02729">
    <property type="entry name" value="Obg_CgtA"/>
    <property type="match status" value="1"/>
</dbReference>
<dbReference type="NCBIfam" id="NF008955">
    <property type="entry name" value="PRK12297.1"/>
    <property type="match status" value="1"/>
</dbReference>
<dbReference type="NCBIfam" id="NF008956">
    <property type="entry name" value="PRK12299.1"/>
    <property type="match status" value="1"/>
</dbReference>
<dbReference type="PANTHER" id="PTHR11702">
    <property type="entry name" value="DEVELOPMENTALLY REGULATED GTP-BINDING PROTEIN-RELATED"/>
    <property type="match status" value="1"/>
</dbReference>
<dbReference type="PANTHER" id="PTHR11702:SF31">
    <property type="entry name" value="MITOCHONDRIAL RIBOSOME-ASSOCIATED GTPASE 2"/>
    <property type="match status" value="1"/>
</dbReference>
<dbReference type="Pfam" id="PF01018">
    <property type="entry name" value="GTP1_OBG"/>
    <property type="match status" value="1"/>
</dbReference>
<dbReference type="Pfam" id="PF01926">
    <property type="entry name" value="MMR_HSR1"/>
    <property type="match status" value="1"/>
</dbReference>
<dbReference type="PIRSF" id="PIRSF002401">
    <property type="entry name" value="GTP_bd_Obg/CgtA"/>
    <property type="match status" value="1"/>
</dbReference>
<dbReference type="PRINTS" id="PR00326">
    <property type="entry name" value="GTP1OBG"/>
</dbReference>
<dbReference type="SUPFAM" id="SSF82051">
    <property type="entry name" value="Obg GTP-binding protein N-terminal domain"/>
    <property type="match status" value="1"/>
</dbReference>
<dbReference type="SUPFAM" id="SSF52540">
    <property type="entry name" value="P-loop containing nucleoside triphosphate hydrolases"/>
    <property type="match status" value="1"/>
</dbReference>
<dbReference type="PROSITE" id="PS51710">
    <property type="entry name" value="G_OBG"/>
    <property type="match status" value="1"/>
</dbReference>
<dbReference type="PROSITE" id="PS00905">
    <property type="entry name" value="GTP1_OBG"/>
    <property type="match status" value="1"/>
</dbReference>
<dbReference type="PROSITE" id="PS51883">
    <property type="entry name" value="OBG"/>
    <property type="match status" value="1"/>
</dbReference>
<organism>
    <name type="scientific">Rickettsia rickettsii (strain Iowa)</name>
    <dbReference type="NCBI Taxonomy" id="452659"/>
    <lineage>
        <taxon>Bacteria</taxon>
        <taxon>Pseudomonadati</taxon>
        <taxon>Pseudomonadota</taxon>
        <taxon>Alphaproteobacteria</taxon>
        <taxon>Rickettsiales</taxon>
        <taxon>Rickettsiaceae</taxon>
        <taxon>Rickettsieae</taxon>
        <taxon>Rickettsia</taxon>
        <taxon>spotted fever group</taxon>
    </lineage>
</organism>
<evidence type="ECO:0000255" key="1">
    <source>
        <dbReference type="HAMAP-Rule" id="MF_01454"/>
    </source>
</evidence>
<evidence type="ECO:0000255" key="2">
    <source>
        <dbReference type="PROSITE-ProRule" id="PRU01231"/>
    </source>
</evidence>
<evidence type="ECO:0000305" key="3"/>
<protein>
    <recommendedName>
        <fullName evidence="1">GTPase Obg</fullName>
        <ecNumber evidence="1">3.6.5.-</ecNumber>
    </recommendedName>
    <alternativeName>
        <fullName evidence="1">GTP-binding protein Obg</fullName>
    </alternativeName>
</protein>
<proteinExistence type="inferred from homology"/>
<keyword id="KW-0963">Cytoplasm</keyword>
<keyword id="KW-0342">GTP-binding</keyword>
<keyword id="KW-0378">Hydrolase</keyword>
<keyword id="KW-0460">Magnesium</keyword>
<keyword id="KW-0479">Metal-binding</keyword>
<keyword id="KW-0547">Nucleotide-binding</keyword>
<sequence>MHFIDEVKIYIKGGNGGNGCVSFHREKFIDRGGPDGGDGGRGGSVIFRSNHHLNTLVNYRYKQHFTAENGENGKDSNRSGKSGKSLVLDVPIGTQIFSEDGNILFYDFTVDDQSFEIIKGGSGGLGNSHFKSSVNQAPRKRTEGEIAEEMWIHLSLKLLSDVGLVGLPNAGKSTFLSVVTAAKPKIADYPFTTLVPNLGVVYVDDEEFVIADIPGLIEGAHQGHGLGDKFLKHIERCNVLIHLIDGSSNDVVADYNTVRLELESYSDYLKNKIETICLNKCDVLTDEEIQEKINKLQKVTNKEVFPISTCTNAGVNKIVKLALETIKNQE</sequence>
<gene>
    <name evidence="1" type="primary">obg</name>
    <name type="ordered locus">RrIowa_1532</name>
</gene>
<name>OBG_RICRO</name>
<reference key="1">
    <citation type="journal article" date="2008" name="Infect. Immun.">
        <title>Genomic comparison of virulent Rickettsia rickettsii Sheila Smith and avirulent Rickettsia rickettsii Iowa.</title>
        <authorList>
            <person name="Ellison D.W."/>
            <person name="Clark T.R."/>
            <person name="Sturdevant D.E."/>
            <person name="Virtaneva K."/>
            <person name="Porcella S.F."/>
            <person name="Hackstadt T."/>
        </authorList>
    </citation>
    <scope>NUCLEOTIDE SEQUENCE [LARGE SCALE GENOMIC DNA]</scope>
    <source>
        <strain>Iowa</strain>
    </source>
</reference>
<accession>B0BVJ1</accession>